<reference key="1">
    <citation type="journal article" date="1995" name="Am. Fern J.">
        <title>Phylogeny and generic circumscriptions of cheilanthoid ferns (Pteridaceae: Cheilanthoideae) inferred from rbcL nucleotide sequences.</title>
        <authorList>
            <person name="Gastony G.J."/>
            <person name="Rollo D.R."/>
        </authorList>
    </citation>
    <scope>NUCLEOTIDE SEQUENCE [GENOMIC DNA]</scope>
</reference>
<comment type="function">
    <text evidence="1">RuBisCO catalyzes two reactions: the carboxylation of D-ribulose 1,5-bisphosphate, the primary event in carbon dioxide fixation, as well as the oxidative fragmentation of the pentose substrate in the photorespiration process. Both reactions occur simultaneously and in competition at the same active site.</text>
</comment>
<comment type="catalytic activity">
    <reaction evidence="1">
        <text>2 (2R)-3-phosphoglycerate + 2 H(+) = D-ribulose 1,5-bisphosphate + CO2 + H2O</text>
        <dbReference type="Rhea" id="RHEA:23124"/>
        <dbReference type="ChEBI" id="CHEBI:15377"/>
        <dbReference type="ChEBI" id="CHEBI:15378"/>
        <dbReference type="ChEBI" id="CHEBI:16526"/>
        <dbReference type="ChEBI" id="CHEBI:57870"/>
        <dbReference type="ChEBI" id="CHEBI:58272"/>
        <dbReference type="EC" id="4.1.1.39"/>
    </reaction>
</comment>
<comment type="catalytic activity">
    <reaction evidence="1">
        <text>D-ribulose 1,5-bisphosphate + O2 = 2-phosphoglycolate + (2R)-3-phosphoglycerate + 2 H(+)</text>
        <dbReference type="Rhea" id="RHEA:36631"/>
        <dbReference type="ChEBI" id="CHEBI:15378"/>
        <dbReference type="ChEBI" id="CHEBI:15379"/>
        <dbReference type="ChEBI" id="CHEBI:57870"/>
        <dbReference type="ChEBI" id="CHEBI:58033"/>
        <dbReference type="ChEBI" id="CHEBI:58272"/>
    </reaction>
</comment>
<comment type="cofactor">
    <cofactor evidence="1">
        <name>Mg(2+)</name>
        <dbReference type="ChEBI" id="CHEBI:18420"/>
    </cofactor>
    <text evidence="1">Binds 1 Mg(2+) ion per subunit.</text>
</comment>
<comment type="subunit">
    <text evidence="1">Heterohexadecamer of 8 large chains and 8 small chains; disulfide-linked. The disulfide link is formed within the large subunit homodimers.</text>
</comment>
<comment type="subcellular location">
    <subcellularLocation>
        <location>Plastid</location>
        <location>Chloroplast</location>
    </subcellularLocation>
</comment>
<comment type="PTM">
    <text evidence="1">The disulfide bond which can form in the large chain dimeric partners within the hexadecamer appears to be associated with oxidative stress and protein turnover.</text>
</comment>
<comment type="miscellaneous">
    <text evidence="1">The basic functional RuBisCO is composed of a large chain homodimer in a 'head-to-tail' conformation. In form I RuBisCO this homodimer is arranged in a barrel-like tetramer with the small subunits forming a tetrameric 'cap' on each end of the 'barrel'.</text>
</comment>
<comment type="similarity">
    <text evidence="1">Belongs to the RuBisCO large chain family. Type I subfamily.</text>
</comment>
<protein>
    <recommendedName>
        <fullName evidence="1">Ribulose bisphosphate carboxylase large chain</fullName>
        <shortName evidence="1">RuBisCO large subunit</shortName>
        <ecNumber evidence="1">4.1.1.39</ecNumber>
    </recommendedName>
</protein>
<dbReference type="EC" id="4.1.1.39" evidence="1"/>
<dbReference type="EMBL" id="U27727">
    <property type="protein sequence ID" value="AAA69828.1"/>
    <property type="molecule type" value="Genomic_DNA"/>
</dbReference>
<dbReference type="GO" id="GO:0009507">
    <property type="term" value="C:chloroplast"/>
    <property type="evidence" value="ECO:0007669"/>
    <property type="project" value="UniProtKB-SubCell"/>
</dbReference>
<dbReference type="GO" id="GO:0000287">
    <property type="term" value="F:magnesium ion binding"/>
    <property type="evidence" value="ECO:0007669"/>
    <property type="project" value="InterPro"/>
</dbReference>
<dbReference type="GO" id="GO:0004497">
    <property type="term" value="F:monooxygenase activity"/>
    <property type="evidence" value="ECO:0007669"/>
    <property type="project" value="UniProtKB-KW"/>
</dbReference>
<dbReference type="GO" id="GO:0016984">
    <property type="term" value="F:ribulose-bisphosphate carboxylase activity"/>
    <property type="evidence" value="ECO:0007669"/>
    <property type="project" value="UniProtKB-EC"/>
</dbReference>
<dbReference type="GO" id="GO:0009853">
    <property type="term" value="P:photorespiration"/>
    <property type="evidence" value="ECO:0007669"/>
    <property type="project" value="UniProtKB-KW"/>
</dbReference>
<dbReference type="GO" id="GO:0019253">
    <property type="term" value="P:reductive pentose-phosphate cycle"/>
    <property type="evidence" value="ECO:0007669"/>
    <property type="project" value="UniProtKB-KW"/>
</dbReference>
<dbReference type="CDD" id="cd08212">
    <property type="entry name" value="RuBisCO_large_I"/>
    <property type="match status" value="1"/>
</dbReference>
<dbReference type="FunFam" id="3.20.20.110:FF:000003">
    <property type="entry name" value="Ribulose bisphosphate carboxylase large chain"/>
    <property type="match status" value="1"/>
</dbReference>
<dbReference type="FunFam" id="3.30.70.150:FF:000001">
    <property type="entry name" value="Ribulose bisphosphate carboxylase large chain"/>
    <property type="match status" value="1"/>
</dbReference>
<dbReference type="Gene3D" id="3.20.20.110">
    <property type="entry name" value="Ribulose bisphosphate carboxylase, large subunit, C-terminal domain"/>
    <property type="match status" value="1"/>
</dbReference>
<dbReference type="Gene3D" id="3.30.70.150">
    <property type="entry name" value="RuBisCO large subunit, N-terminal domain"/>
    <property type="match status" value="1"/>
</dbReference>
<dbReference type="HAMAP" id="MF_01338">
    <property type="entry name" value="RuBisCO_L_type1"/>
    <property type="match status" value="1"/>
</dbReference>
<dbReference type="InterPro" id="IPR033966">
    <property type="entry name" value="RuBisCO"/>
</dbReference>
<dbReference type="InterPro" id="IPR020878">
    <property type="entry name" value="RuBisCo_large_chain_AS"/>
</dbReference>
<dbReference type="InterPro" id="IPR000685">
    <property type="entry name" value="RuBisCO_lsu_C"/>
</dbReference>
<dbReference type="InterPro" id="IPR036376">
    <property type="entry name" value="RuBisCO_lsu_C_sf"/>
</dbReference>
<dbReference type="InterPro" id="IPR017443">
    <property type="entry name" value="RuBisCO_lsu_fd_N"/>
</dbReference>
<dbReference type="InterPro" id="IPR036422">
    <property type="entry name" value="RuBisCO_lsu_N_sf"/>
</dbReference>
<dbReference type="InterPro" id="IPR020888">
    <property type="entry name" value="RuBisCO_lsuI"/>
</dbReference>
<dbReference type="NCBIfam" id="NF003252">
    <property type="entry name" value="PRK04208.1"/>
    <property type="match status" value="1"/>
</dbReference>
<dbReference type="PANTHER" id="PTHR42704">
    <property type="entry name" value="RIBULOSE BISPHOSPHATE CARBOXYLASE"/>
    <property type="match status" value="1"/>
</dbReference>
<dbReference type="PANTHER" id="PTHR42704:SF17">
    <property type="entry name" value="RIBULOSE BISPHOSPHATE CARBOXYLASE LARGE CHAIN"/>
    <property type="match status" value="1"/>
</dbReference>
<dbReference type="Pfam" id="PF00016">
    <property type="entry name" value="RuBisCO_large"/>
    <property type="match status" value="1"/>
</dbReference>
<dbReference type="Pfam" id="PF02788">
    <property type="entry name" value="RuBisCO_large_N"/>
    <property type="match status" value="1"/>
</dbReference>
<dbReference type="SFLD" id="SFLDG01052">
    <property type="entry name" value="RuBisCO"/>
    <property type="match status" value="1"/>
</dbReference>
<dbReference type="SFLD" id="SFLDS00014">
    <property type="entry name" value="RuBisCO"/>
    <property type="match status" value="1"/>
</dbReference>
<dbReference type="SFLD" id="SFLDG00301">
    <property type="entry name" value="RuBisCO-like_proteins"/>
    <property type="match status" value="1"/>
</dbReference>
<dbReference type="SUPFAM" id="SSF51649">
    <property type="entry name" value="RuBisCo, C-terminal domain"/>
    <property type="match status" value="1"/>
</dbReference>
<dbReference type="SUPFAM" id="SSF54966">
    <property type="entry name" value="RuBisCO, large subunit, small (N-terminal) domain"/>
    <property type="match status" value="1"/>
</dbReference>
<dbReference type="PROSITE" id="PS00157">
    <property type="entry name" value="RUBISCO_LARGE"/>
    <property type="match status" value="1"/>
</dbReference>
<gene>
    <name evidence="1" type="primary">rbcL</name>
</gene>
<sequence>GVGFKAGVKDYRLTYYTPEYKTKDTDILAAFRMTPQPGVPAEEAGAAVAAESSTGTWTTVWTDGLTSLDRYKGRCYDIEPVAGEENQYIAYVAYPLDLFEEGSVTNMLTSIVGDVFGFKALRALXXEDLRIPPAYSKTFLGPPHGIQVERDKLNKYGRPLLGCTIKPKLGLSAKNYGRAVYECLRGGLDFTKDDENVNSQPFMRWRDRFLFVAEALFKSQAETGEIKGHYLNATAGTCEEMMKRAVFARELGVPIVMHDYLTGGFTANTSLAFYCRDNGLLLHIHRAMHAVIDRQKDHGMHFRVLAKALRMSGGDHIHAGTVVGKLEGEREVTLGFVDLLRDDYIEKDRSRGIYFTQDWVSMPGVFPVASGGIHVWHMPALTEIFGDDSVLQFGGGTLGHPWGNAPGAVANRVALEACVQARNEGRDLAREGNEIIREASK</sequence>
<feature type="chain" id="PRO_0000062543" description="Ribulose bisphosphate carboxylase large chain">
    <location>
        <begin position="1" status="less than"/>
        <end position="441" status="greater than"/>
    </location>
</feature>
<feature type="active site" description="Proton acceptor" evidence="1">
    <location>
        <position position="166"/>
    </location>
</feature>
<feature type="active site" description="Proton acceptor" evidence="1">
    <location>
        <position position="285"/>
    </location>
</feature>
<feature type="binding site" evidence="1">
    <location>
        <position position="164"/>
    </location>
    <ligand>
        <name>substrate</name>
    </ligand>
</feature>
<feature type="binding site" evidence="1">
    <location>
        <position position="168"/>
    </location>
    <ligand>
        <name>substrate</name>
    </ligand>
</feature>
<feature type="binding site" description="via carbamate group" evidence="1">
    <location>
        <position position="192"/>
    </location>
    <ligand>
        <name>Mg(2+)</name>
        <dbReference type="ChEBI" id="CHEBI:18420"/>
    </ligand>
</feature>
<feature type="binding site" evidence="1">
    <location>
        <position position="194"/>
    </location>
    <ligand>
        <name>Mg(2+)</name>
        <dbReference type="ChEBI" id="CHEBI:18420"/>
    </ligand>
</feature>
<feature type="binding site" evidence="1">
    <location>
        <position position="195"/>
    </location>
    <ligand>
        <name>Mg(2+)</name>
        <dbReference type="ChEBI" id="CHEBI:18420"/>
    </ligand>
</feature>
<feature type="binding site" evidence="1">
    <location>
        <position position="286"/>
    </location>
    <ligand>
        <name>substrate</name>
    </ligand>
</feature>
<feature type="binding site" evidence="1">
    <location>
        <position position="318"/>
    </location>
    <ligand>
        <name>substrate</name>
    </ligand>
</feature>
<feature type="binding site" evidence="1">
    <location>
        <position position="370"/>
    </location>
    <ligand>
        <name>substrate</name>
    </ligand>
</feature>
<feature type="site" description="Transition state stabilizer" evidence="1">
    <location>
        <position position="325"/>
    </location>
</feature>
<feature type="modified residue" description="N6,N6,N6-trimethyllysine" evidence="1">
    <location>
        <position position="5"/>
    </location>
</feature>
<feature type="modified residue" description="N6-carboxylysine" evidence="1">
    <location>
        <position position="192"/>
    </location>
</feature>
<feature type="disulfide bond" description="Interchain; in linked form" evidence="1">
    <location>
        <position position="238"/>
    </location>
</feature>
<feature type="non-terminal residue">
    <location>
        <position position="1"/>
    </location>
</feature>
<feature type="non-terminal residue">
    <location>
        <position position="441"/>
    </location>
</feature>
<name>RBL_HEMEN</name>
<organism>
    <name type="scientific">Hemionitis engywookii</name>
    <name type="common">Fendler's false cloak fern</name>
    <name type="synonym">Argyrochosma fendleri</name>
    <dbReference type="NCBI Taxonomy" id="40963"/>
    <lineage>
        <taxon>Eukaryota</taxon>
        <taxon>Viridiplantae</taxon>
        <taxon>Streptophyta</taxon>
        <taxon>Embryophyta</taxon>
        <taxon>Tracheophyta</taxon>
        <taxon>Polypodiopsida</taxon>
        <taxon>Polypodiidae</taxon>
        <taxon>Polypodiales</taxon>
        <taxon>Pteridineae</taxon>
        <taxon>Pteridaceae</taxon>
        <taxon>Cheilanthoideae</taxon>
        <taxon>Hemionitis</taxon>
    </lineage>
</organism>
<evidence type="ECO:0000255" key="1">
    <source>
        <dbReference type="HAMAP-Rule" id="MF_01338"/>
    </source>
</evidence>
<proteinExistence type="inferred from homology"/>
<accession>Q32668</accession>
<keyword id="KW-0113">Calvin cycle</keyword>
<keyword id="KW-0120">Carbon dioxide fixation</keyword>
<keyword id="KW-0150">Chloroplast</keyword>
<keyword id="KW-1015">Disulfide bond</keyword>
<keyword id="KW-0456">Lyase</keyword>
<keyword id="KW-0460">Magnesium</keyword>
<keyword id="KW-0479">Metal-binding</keyword>
<keyword id="KW-0488">Methylation</keyword>
<keyword id="KW-0503">Monooxygenase</keyword>
<keyword id="KW-0560">Oxidoreductase</keyword>
<keyword id="KW-0601">Photorespiration</keyword>
<keyword id="KW-0602">Photosynthesis</keyword>
<keyword id="KW-0934">Plastid</keyword>
<geneLocation type="chloroplast"/>